<protein>
    <recommendedName>
        <fullName evidence="5">Peptide transporter PTR_A</fullName>
    </recommendedName>
</protein>
<evidence type="ECO:0000255" key="1"/>
<evidence type="ECO:0000255" key="2">
    <source>
        <dbReference type="PROSITE-ProRule" id="PRU00498"/>
    </source>
</evidence>
<evidence type="ECO:0000256" key="3">
    <source>
        <dbReference type="SAM" id="MobiDB-lite"/>
    </source>
</evidence>
<evidence type="ECO:0000269" key="4">
    <source>
    </source>
</evidence>
<evidence type="ECO:0000303" key="5">
    <source>
    </source>
</evidence>
<evidence type="ECO:0000305" key="6"/>
<evidence type="ECO:0000305" key="7">
    <source>
    </source>
</evidence>
<keyword id="KW-1003">Cell membrane</keyword>
<keyword id="KW-0325">Glycoprotein</keyword>
<keyword id="KW-0472">Membrane</keyword>
<keyword id="KW-0571">Peptide transport</keyword>
<keyword id="KW-0653">Protein transport</keyword>
<keyword id="KW-0812">Transmembrane</keyword>
<keyword id="KW-1133">Transmembrane helix</keyword>
<keyword id="KW-0813">Transport</keyword>
<gene>
    <name evidence="5" type="primary">PTR_A</name>
    <name type="ORF">B9J08_004188</name>
</gene>
<organism>
    <name type="scientific">Candidozyma auris</name>
    <name type="common">Yeast</name>
    <name type="synonym">Candida auris</name>
    <dbReference type="NCBI Taxonomy" id="498019"/>
    <lineage>
        <taxon>Eukaryota</taxon>
        <taxon>Fungi</taxon>
        <taxon>Dikarya</taxon>
        <taxon>Ascomycota</taxon>
        <taxon>Saccharomycotina</taxon>
        <taxon>Pichiomycetes</taxon>
        <taxon>Metschnikowiaceae</taxon>
        <taxon>Candidozyma</taxon>
    </lineage>
</organism>
<comment type="function">
    <text evidence="4">Peptide transporter that exploits the inwardly directed proton motive force to facilitate the cellular uptake of di/tripeptides.</text>
</comment>
<comment type="catalytic activity">
    <reaction evidence="4">
        <text>a dipeptide(out) + H(+)(out) = a dipeptide(in) + H(+)(in)</text>
        <dbReference type="Rhea" id="RHEA:64392"/>
        <dbReference type="ChEBI" id="CHEBI:15378"/>
        <dbReference type="ChEBI" id="CHEBI:90799"/>
    </reaction>
    <physiologicalReaction direction="left-to-right" evidence="4">
        <dbReference type="Rhea" id="RHEA:64393"/>
    </physiologicalReaction>
</comment>
<comment type="catalytic activity">
    <reaction evidence="4">
        <text>an L-amino acid tripeptide(out) + H(+)(out) = an L-amino acid tripeptide(in) + H(+)(in)</text>
        <dbReference type="Rhea" id="RHEA:64400"/>
        <dbReference type="ChEBI" id="CHEBI:15378"/>
        <dbReference type="ChEBI" id="CHEBI:155837"/>
    </reaction>
    <physiologicalReaction direction="left-to-right" evidence="4">
        <dbReference type="Rhea" id="RHEA:64401"/>
    </physiologicalReaction>
</comment>
<comment type="subcellular location">
    <subcellularLocation>
        <location evidence="7">Cell membrane</location>
        <topology evidence="1">Multi-pass membrane protein</topology>
    </subcellularLocation>
</comment>
<comment type="similarity">
    <text evidence="6">Belongs to the major facilitator superfamily. Proton-dependent oligopeptide transporter (POT/PTR) (TC 2.A.17) family.</text>
</comment>
<feature type="chain" id="PRO_0000459403" description="Peptide transporter PTR_A">
    <location>
        <begin position="1"/>
        <end position="589"/>
    </location>
</feature>
<feature type="transmembrane region" description="Helical" evidence="1">
    <location>
        <begin position="74"/>
        <end position="95"/>
    </location>
</feature>
<feature type="transmembrane region" description="Helical" evidence="1">
    <location>
        <begin position="124"/>
        <end position="144"/>
    </location>
</feature>
<feature type="transmembrane region" description="Helical" evidence="1">
    <location>
        <begin position="153"/>
        <end position="173"/>
    </location>
</feature>
<feature type="transmembrane region" description="Helical" evidence="1">
    <location>
        <begin position="180"/>
        <end position="200"/>
    </location>
</feature>
<feature type="transmembrane region" description="Helical" evidence="1">
    <location>
        <begin position="236"/>
        <end position="256"/>
    </location>
</feature>
<feature type="transmembrane region" description="Helical" evidence="1">
    <location>
        <begin position="266"/>
        <end position="286"/>
    </location>
</feature>
<feature type="transmembrane region" description="Helical" evidence="1">
    <location>
        <begin position="345"/>
        <end position="365"/>
    </location>
</feature>
<feature type="transmembrane region" description="Helical" evidence="1">
    <location>
        <begin position="388"/>
        <end position="408"/>
    </location>
</feature>
<feature type="transmembrane region" description="Helical" evidence="1">
    <location>
        <begin position="420"/>
        <end position="440"/>
    </location>
</feature>
<feature type="transmembrane region" description="Helical" evidence="1">
    <location>
        <begin position="467"/>
        <end position="487"/>
    </location>
</feature>
<feature type="transmembrane region" description="Helical" evidence="1">
    <location>
        <begin position="502"/>
        <end position="522"/>
    </location>
</feature>
<feature type="transmembrane region" description="Helical" evidence="1">
    <location>
        <begin position="533"/>
        <end position="553"/>
    </location>
</feature>
<feature type="region of interest" description="Disordered" evidence="3">
    <location>
        <begin position="1"/>
        <end position="56"/>
    </location>
</feature>
<feature type="compositionally biased region" description="Basic and acidic residues" evidence="3">
    <location>
        <begin position="19"/>
        <end position="42"/>
    </location>
</feature>
<feature type="glycosylation site" description="N-linked (GlcNAc...) asparagine" evidence="2">
    <location>
        <position position="233"/>
    </location>
</feature>
<reference key="1">
    <citation type="journal article" date="2017" name="Clin. Infect. Dis.">
        <title>Simultaneous emergence of multidrug-resistant Candida auris on 3 continents confirmed by whole-genome sequencing and epidemiological analyses.</title>
        <authorList>
            <person name="Lockhart S.R."/>
            <person name="Etienne K.A."/>
            <person name="Vallabhaneni S."/>
            <person name="Farooqi J."/>
            <person name="Chowdhary A."/>
            <person name="Govender N.P."/>
            <person name="Colombo A.L."/>
            <person name="Calvo B."/>
            <person name="Cuomo C.A."/>
            <person name="Desjardins C.A."/>
            <person name="Berkow E.L."/>
            <person name="Castanheira M."/>
            <person name="Magobo R.E."/>
            <person name="Jabeen K."/>
            <person name="Asghar R.J."/>
            <person name="Meis J.F."/>
            <person name="Jackson B."/>
            <person name="Chiller T."/>
            <person name="Litvintseva A.P."/>
        </authorList>
    </citation>
    <scope>NUCLEOTIDE SEQUENCE [LARGE SCALE GENOMIC DNA]</scope>
    <source>
        <strain>B8441</strain>
    </source>
</reference>
<reference key="2">
    <citation type="journal article" date="2022" name="Appl. Microbiol. Biotechnol.">
        <title>Genome-wide analysis of PTR transporters in Candida species and their functional characterization in Candida auris.</title>
        <authorList>
            <person name="Khatoon R."/>
            <person name="Sharma S."/>
            <person name="Prasad R."/>
            <person name="Lynn A.M."/>
            <person name="Prakash A."/>
            <person name="Banerjee A."/>
        </authorList>
    </citation>
    <scope>FUNCTION</scope>
    <scope>TRANSPORTER ACTIVITY</scope>
</reference>
<sequence>MSETKPAANDLSNVPSASDSDKDNSLDKVHSLEKTGVHEDINKLPSSDLEQLEDDGREPTLEEMKKLRHISEKIPLSCWLVAIVELAERFSYYGLSTPFQNYMQNSPEDKPKGVLHLKNSGATALSYFWQFWCYVTPIFGAWIADTYTGKYNAICIFCGIYLVGILILFITSIPSVASYNTSLGGFIVAIIIIGLGTGGVKSNVSPLIADQIPKTKPVIKVLKSGERVIQDPNITIQNVFMFFYLMINIGSLSVIATTSLEHHVDFWAGYLLPLCFFCIAPLVLLLGRPYYVKVPVGEQVIARSFRCTYLAVKNKFNFDAARPSLHPEAGYPWSEKFVEEVRRSVYACKVFVFYPIYWLVYGQMINNFVSQAGQMELHGLPNDILQAINAITIIIFIPICERFVYPFIRRFTPFRAITKIFWGFMFASSAMVYAGVLQHFIYQQGPCYEFPKECAEEFRQVPNRIHIAIQTPAYFLIGMSEILASITGLEYAYTKAPVSMKSFIMSLFLVTNAFGSAIGIALSPTSKNPKLVWTYTGLAVSCFIAGCLFYIIFHHYNDKEDELNQLDYMEEDEVRLQPITSITESLAAR</sequence>
<name>PTRA_CANAR</name>
<accession>A0A2H0ZJA8</accession>
<dbReference type="EMBL" id="PEKT02000008">
    <property type="protein sequence ID" value="PIS50373.1"/>
    <property type="molecule type" value="Genomic_DNA"/>
</dbReference>
<dbReference type="RefSeq" id="XP_018168003.1">
    <property type="nucleotide sequence ID" value="XM_018314318.1"/>
</dbReference>
<dbReference type="SMR" id="A0A2H0ZJA8"/>
<dbReference type="EnsemblFungi" id="B9J08_004188-t37_1">
    <property type="protein sequence ID" value="B9J08_004188-t37_1-p1"/>
    <property type="gene ID" value="B9J08_004188"/>
</dbReference>
<dbReference type="VEuPathDB" id="FungiDB:B9J08_004188"/>
<dbReference type="VEuPathDB" id="FungiDB:CJI96_0005216"/>
<dbReference type="VEuPathDB" id="FungiDB:CJI97_004252"/>
<dbReference type="VEuPathDB" id="FungiDB:CJJ07_002569"/>
<dbReference type="VEuPathDB" id="FungiDB:CJJ09_000278"/>
<dbReference type="VEuPathDB" id="FungiDB:QG37_05048"/>
<dbReference type="OMA" id="QMMGVWF"/>
<dbReference type="GO" id="GO:0005886">
    <property type="term" value="C:plasma membrane"/>
    <property type="evidence" value="ECO:0007669"/>
    <property type="project" value="UniProtKB-SubCell"/>
</dbReference>
<dbReference type="GO" id="GO:0022857">
    <property type="term" value="F:transmembrane transporter activity"/>
    <property type="evidence" value="ECO:0007669"/>
    <property type="project" value="InterPro"/>
</dbReference>
<dbReference type="GO" id="GO:0006857">
    <property type="term" value="P:oligopeptide transport"/>
    <property type="evidence" value="ECO:0007669"/>
    <property type="project" value="InterPro"/>
</dbReference>
<dbReference type="GO" id="GO:0015031">
    <property type="term" value="P:protein transport"/>
    <property type="evidence" value="ECO:0007669"/>
    <property type="project" value="UniProtKB-KW"/>
</dbReference>
<dbReference type="FunFam" id="1.20.1250.20:FF:000085">
    <property type="entry name" value="MFS peptide transporter Ptr2"/>
    <property type="match status" value="1"/>
</dbReference>
<dbReference type="Gene3D" id="1.20.1250.20">
    <property type="entry name" value="MFS general substrate transporter like domains"/>
    <property type="match status" value="1"/>
</dbReference>
<dbReference type="InterPro" id="IPR036259">
    <property type="entry name" value="MFS_trans_sf"/>
</dbReference>
<dbReference type="InterPro" id="IPR000109">
    <property type="entry name" value="POT_fam"/>
</dbReference>
<dbReference type="InterPro" id="IPR018456">
    <property type="entry name" value="PTR2_symporter_CS"/>
</dbReference>
<dbReference type="PANTHER" id="PTHR11654">
    <property type="entry name" value="OLIGOPEPTIDE TRANSPORTER-RELATED"/>
    <property type="match status" value="1"/>
</dbReference>
<dbReference type="Pfam" id="PF00854">
    <property type="entry name" value="PTR2"/>
    <property type="match status" value="1"/>
</dbReference>
<dbReference type="SUPFAM" id="SSF103473">
    <property type="entry name" value="MFS general substrate transporter"/>
    <property type="match status" value="1"/>
</dbReference>
<dbReference type="PROSITE" id="PS01023">
    <property type="entry name" value="PTR2_2"/>
    <property type="match status" value="1"/>
</dbReference>
<proteinExistence type="inferred from homology"/>